<comment type="function">
    <text evidence="1">Together with its co-chaperonin GroES, plays an essential role in assisting protein folding. The GroEL-GroES system forms a nano-cage that allows encapsulation of the non-native substrate proteins and provides a physical environment optimized to promote and accelerate protein folding.</text>
</comment>
<comment type="catalytic activity">
    <reaction evidence="1">
        <text>ATP + H2O + a folded polypeptide = ADP + phosphate + an unfolded polypeptide.</text>
        <dbReference type="EC" id="5.6.1.7"/>
    </reaction>
</comment>
<comment type="subunit">
    <text evidence="1">Forms a cylinder of 14 subunits composed of two heptameric rings stacked back-to-back. Interacts with the co-chaperonin GroES.</text>
</comment>
<comment type="subcellular location">
    <subcellularLocation>
        <location evidence="1">Cytoplasm</location>
    </subcellularLocation>
</comment>
<comment type="similarity">
    <text evidence="1">Belongs to the chaperonin (HSP60) family.</text>
</comment>
<dbReference type="EC" id="5.6.1.7" evidence="1"/>
<dbReference type="EMBL" id="CP001103">
    <property type="protein sequence ID" value="AEB00048.1"/>
    <property type="molecule type" value="Genomic_DNA"/>
</dbReference>
<dbReference type="RefSeq" id="WP_012520087.1">
    <property type="nucleotide sequence ID" value="NC_011138.3"/>
</dbReference>
<dbReference type="SMR" id="B4S112"/>
<dbReference type="KEGG" id="amc:MADE_1019625"/>
<dbReference type="HOGENOM" id="CLU_016503_3_0_6"/>
<dbReference type="Proteomes" id="UP000001870">
    <property type="component" value="Chromosome"/>
</dbReference>
<dbReference type="GO" id="GO:0005737">
    <property type="term" value="C:cytoplasm"/>
    <property type="evidence" value="ECO:0007669"/>
    <property type="project" value="UniProtKB-SubCell"/>
</dbReference>
<dbReference type="GO" id="GO:0005524">
    <property type="term" value="F:ATP binding"/>
    <property type="evidence" value="ECO:0007669"/>
    <property type="project" value="UniProtKB-UniRule"/>
</dbReference>
<dbReference type="GO" id="GO:0140662">
    <property type="term" value="F:ATP-dependent protein folding chaperone"/>
    <property type="evidence" value="ECO:0007669"/>
    <property type="project" value="InterPro"/>
</dbReference>
<dbReference type="GO" id="GO:0016853">
    <property type="term" value="F:isomerase activity"/>
    <property type="evidence" value="ECO:0007669"/>
    <property type="project" value="UniProtKB-KW"/>
</dbReference>
<dbReference type="GO" id="GO:0051082">
    <property type="term" value="F:unfolded protein binding"/>
    <property type="evidence" value="ECO:0007669"/>
    <property type="project" value="UniProtKB-UniRule"/>
</dbReference>
<dbReference type="GO" id="GO:0042026">
    <property type="term" value="P:protein refolding"/>
    <property type="evidence" value="ECO:0007669"/>
    <property type="project" value="UniProtKB-UniRule"/>
</dbReference>
<dbReference type="CDD" id="cd03344">
    <property type="entry name" value="GroEL"/>
    <property type="match status" value="1"/>
</dbReference>
<dbReference type="FunFam" id="1.10.560.10:FF:000001">
    <property type="entry name" value="60 kDa chaperonin"/>
    <property type="match status" value="1"/>
</dbReference>
<dbReference type="FunFam" id="3.50.7.10:FF:000001">
    <property type="entry name" value="60 kDa chaperonin"/>
    <property type="match status" value="1"/>
</dbReference>
<dbReference type="Gene3D" id="3.50.7.10">
    <property type="entry name" value="GroEL"/>
    <property type="match status" value="1"/>
</dbReference>
<dbReference type="Gene3D" id="1.10.560.10">
    <property type="entry name" value="GroEL-like equatorial domain"/>
    <property type="match status" value="1"/>
</dbReference>
<dbReference type="Gene3D" id="3.30.260.10">
    <property type="entry name" value="TCP-1-like chaperonin intermediate domain"/>
    <property type="match status" value="1"/>
</dbReference>
<dbReference type="HAMAP" id="MF_00600">
    <property type="entry name" value="CH60"/>
    <property type="match status" value="1"/>
</dbReference>
<dbReference type="InterPro" id="IPR018370">
    <property type="entry name" value="Chaperonin_Cpn60_CS"/>
</dbReference>
<dbReference type="InterPro" id="IPR001844">
    <property type="entry name" value="Cpn60/GroEL"/>
</dbReference>
<dbReference type="InterPro" id="IPR002423">
    <property type="entry name" value="Cpn60/GroEL/TCP-1"/>
</dbReference>
<dbReference type="InterPro" id="IPR027409">
    <property type="entry name" value="GroEL-like_apical_dom_sf"/>
</dbReference>
<dbReference type="InterPro" id="IPR027413">
    <property type="entry name" value="GROEL-like_equatorial_sf"/>
</dbReference>
<dbReference type="InterPro" id="IPR027410">
    <property type="entry name" value="TCP-1-like_intermed_sf"/>
</dbReference>
<dbReference type="NCBIfam" id="TIGR02348">
    <property type="entry name" value="GroEL"/>
    <property type="match status" value="1"/>
</dbReference>
<dbReference type="NCBIfam" id="NF000592">
    <property type="entry name" value="PRK00013.1"/>
    <property type="match status" value="1"/>
</dbReference>
<dbReference type="NCBIfam" id="NF009487">
    <property type="entry name" value="PRK12849.1"/>
    <property type="match status" value="1"/>
</dbReference>
<dbReference type="NCBIfam" id="NF009488">
    <property type="entry name" value="PRK12850.1"/>
    <property type="match status" value="1"/>
</dbReference>
<dbReference type="NCBIfam" id="NF009489">
    <property type="entry name" value="PRK12851.1"/>
    <property type="match status" value="1"/>
</dbReference>
<dbReference type="PANTHER" id="PTHR45633">
    <property type="entry name" value="60 KDA HEAT SHOCK PROTEIN, MITOCHONDRIAL"/>
    <property type="match status" value="1"/>
</dbReference>
<dbReference type="Pfam" id="PF00118">
    <property type="entry name" value="Cpn60_TCP1"/>
    <property type="match status" value="1"/>
</dbReference>
<dbReference type="PRINTS" id="PR00298">
    <property type="entry name" value="CHAPERONIN60"/>
</dbReference>
<dbReference type="SUPFAM" id="SSF52029">
    <property type="entry name" value="GroEL apical domain-like"/>
    <property type="match status" value="1"/>
</dbReference>
<dbReference type="SUPFAM" id="SSF48592">
    <property type="entry name" value="GroEL equatorial domain-like"/>
    <property type="match status" value="1"/>
</dbReference>
<dbReference type="SUPFAM" id="SSF54849">
    <property type="entry name" value="GroEL-intermediate domain like"/>
    <property type="match status" value="1"/>
</dbReference>
<dbReference type="PROSITE" id="PS00296">
    <property type="entry name" value="CHAPERONINS_CPN60"/>
    <property type="match status" value="1"/>
</dbReference>
<sequence length="546" mass="57412">MAAKEVRFGDDARSKMLKGVNTLANAVKVTLGPKGRNVVLDKSFGAPTITKDGVSVAKEIELEDKFENMGAQMVKEVASKANDEAGDGTTTATVLAQAIVTEGLKSVAAGMNPMDLKRGIDKAVIAAVEELKALSTDCADSKSIAQVGTISANSDAEVGDIIAQAMEKVGKEGVITVEEGQALQNELDVVEGMQFDRGYLSPYFINNQENGTVELDNPFILLVDKKISNIRELLPTLEGVAKAGKPLMIIAEDVEGEALATLVVNNMRGIVKVAAVKAPGFGDRRKAMLQDIAILTGGTVISEEIGLELEKVQLEDLGTAKRVVINKDNTTVVDGNGDQEAIEGRCAQIKGQIEESSSDYDKEKLQERLAKLSGGVAVIKVGAATEVEMKEKKDRVEDALHATRAAVEEGVVPGGGVALVRAAAKLSELTGDNEDQTVGVKLALRAMEAPLRQISINSGAEASVVVNEVKNGDGNYGYNAGNDTYGDMLEMGILDPTKVTRSALQFASSIASLMITTEAMVAELPKDEAAPAMPDMGGMGGMGGMM</sequence>
<organism>
    <name type="scientific">Alteromonas mediterranea (strain DSM 17117 / CIP 110805 / LMG 28347 / Deep ecotype)</name>
    <dbReference type="NCBI Taxonomy" id="1774373"/>
    <lineage>
        <taxon>Bacteria</taxon>
        <taxon>Pseudomonadati</taxon>
        <taxon>Pseudomonadota</taxon>
        <taxon>Gammaproteobacteria</taxon>
        <taxon>Alteromonadales</taxon>
        <taxon>Alteromonadaceae</taxon>
        <taxon>Alteromonas/Salinimonas group</taxon>
        <taxon>Alteromonas</taxon>
    </lineage>
</organism>
<accession>B4S112</accession>
<accession>F2GAT3</accession>
<feature type="chain" id="PRO_1000129967" description="Chaperonin GroEL">
    <location>
        <begin position="1"/>
        <end position="546"/>
    </location>
</feature>
<feature type="binding site" evidence="1">
    <location>
        <begin position="30"/>
        <end position="33"/>
    </location>
    <ligand>
        <name>ATP</name>
        <dbReference type="ChEBI" id="CHEBI:30616"/>
    </ligand>
</feature>
<feature type="binding site" evidence="1">
    <location>
        <position position="51"/>
    </location>
    <ligand>
        <name>ATP</name>
        <dbReference type="ChEBI" id="CHEBI:30616"/>
    </ligand>
</feature>
<feature type="binding site" evidence="1">
    <location>
        <begin position="87"/>
        <end position="91"/>
    </location>
    <ligand>
        <name>ATP</name>
        <dbReference type="ChEBI" id="CHEBI:30616"/>
    </ligand>
</feature>
<feature type="binding site" evidence="1">
    <location>
        <position position="415"/>
    </location>
    <ligand>
        <name>ATP</name>
        <dbReference type="ChEBI" id="CHEBI:30616"/>
    </ligand>
</feature>
<feature type="binding site" evidence="1">
    <location>
        <position position="495"/>
    </location>
    <ligand>
        <name>ATP</name>
        <dbReference type="ChEBI" id="CHEBI:30616"/>
    </ligand>
</feature>
<name>CH60_ALTMD</name>
<gene>
    <name evidence="1" type="primary">groEL</name>
    <name evidence="1" type="synonym">groL</name>
    <name type="ordered locus">MADE_1019625</name>
</gene>
<keyword id="KW-0067">ATP-binding</keyword>
<keyword id="KW-0143">Chaperone</keyword>
<keyword id="KW-0963">Cytoplasm</keyword>
<keyword id="KW-0413">Isomerase</keyword>
<keyword id="KW-0547">Nucleotide-binding</keyword>
<reference key="1">
    <citation type="journal article" date="2008" name="ISME J.">
        <title>Comparative genomics of two ecotypes of the marine planktonic copiotroph Alteromonas macleodii suggests alternative lifestyles associated with different kinds of particulate organic matter.</title>
        <authorList>
            <person name="Ivars-Martinez E."/>
            <person name="Martin-Cuadrado A.-B."/>
            <person name="D'Auria G."/>
            <person name="Mira A."/>
            <person name="Ferriera S."/>
            <person name="Johnson J."/>
            <person name="Friedman R."/>
            <person name="Rodriguez-Valera F."/>
        </authorList>
    </citation>
    <scope>NUCLEOTIDE SEQUENCE [LARGE SCALE GENOMIC DNA]</scope>
    <source>
        <strain>DSM 17117 / CIP 110805 / LMG 28347 / Deep ecotype</strain>
    </source>
</reference>
<proteinExistence type="inferred from homology"/>
<evidence type="ECO:0000255" key="1">
    <source>
        <dbReference type="HAMAP-Rule" id="MF_00600"/>
    </source>
</evidence>
<protein>
    <recommendedName>
        <fullName evidence="1">Chaperonin GroEL</fullName>
        <ecNumber evidence="1">5.6.1.7</ecNumber>
    </recommendedName>
    <alternativeName>
        <fullName evidence="1">60 kDa chaperonin</fullName>
    </alternativeName>
    <alternativeName>
        <fullName evidence="1">Chaperonin-60</fullName>
        <shortName evidence="1">Cpn60</shortName>
    </alternativeName>
</protein>